<keyword id="KW-0028">Amino-acid biosynthesis</keyword>
<keyword id="KW-0067">ATP-binding</keyword>
<keyword id="KW-0963">Cytoplasm</keyword>
<keyword id="KW-0418">Kinase</keyword>
<keyword id="KW-0547">Nucleotide-binding</keyword>
<keyword id="KW-0641">Proline biosynthesis</keyword>
<keyword id="KW-0808">Transferase</keyword>
<reference key="1">
    <citation type="submission" date="2008-05" db="EMBL/GenBank/DDBJ databases">
        <title>Complete sequence of Rhodopseudomonas palustris TIE-1.</title>
        <authorList>
            <consortium name="US DOE Joint Genome Institute"/>
            <person name="Lucas S."/>
            <person name="Copeland A."/>
            <person name="Lapidus A."/>
            <person name="Glavina del Rio T."/>
            <person name="Dalin E."/>
            <person name="Tice H."/>
            <person name="Pitluck S."/>
            <person name="Chain P."/>
            <person name="Malfatti S."/>
            <person name="Shin M."/>
            <person name="Vergez L."/>
            <person name="Lang D."/>
            <person name="Schmutz J."/>
            <person name="Larimer F."/>
            <person name="Land M."/>
            <person name="Hauser L."/>
            <person name="Kyrpides N."/>
            <person name="Mikhailova N."/>
            <person name="Emerson D."/>
            <person name="Newman D.K."/>
            <person name="Roden E."/>
            <person name="Richardson P."/>
        </authorList>
    </citation>
    <scope>NUCLEOTIDE SEQUENCE [LARGE SCALE GENOMIC DNA]</scope>
    <source>
        <strain>TIE-1</strain>
    </source>
</reference>
<evidence type="ECO:0000255" key="1">
    <source>
        <dbReference type="HAMAP-Rule" id="MF_00456"/>
    </source>
</evidence>
<proteinExistence type="inferred from homology"/>
<gene>
    <name evidence="1" type="primary">proB</name>
    <name type="ordered locus">Rpal_0158</name>
</gene>
<accession>B3Q732</accession>
<sequence>MASPKLHDFRHIVVKVGSSLLIDSAAGEVRAGWLAALAADIAELHRGGRDVMVVSSGSIALGRSRLKLPRGPLKLEESQAAAAVGQIELARTWSEVLGAHGIGAGQILVTFQDTEERRRYLNARSTIAKLLEWRAVPVINENDTVATTEIRYGDNDRLAARVATMASADLLILLSDIDGLYTAPPGNDPDATLIPVVEAITAEIEGMAGAAGSELSRGGMRTKIEAAKIATSAGTHMLIASGKIDHPLRAIAEGGKCTWFLTPANPVTARKRWIAGTLEPKGTLTIDAGAVSALRAGKSLLPAGVIRVDGQFSRGDAVIVRGPDTHEIGRGLVAYDAEDAEKIKGHSSPDVMMILGITGRAEMIHRDDLVVGTAPT</sequence>
<name>PROB_RHOPT</name>
<feature type="chain" id="PRO_1000125254" description="Glutamate 5-kinase">
    <location>
        <begin position="1"/>
        <end position="376"/>
    </location>
</feature>
<feature type="domain" description="PUA" evidence="1">
    <location>
        <begin position="281"/>
        <end position="358"/>
    </location>
</feature>
<feature type="binding site" evidence="1">
    <location>
        <position position="15"/>
    </location>
    <ligand>
        <name>ATP</name>
        <dbReference type="ChEBI" id="CHEBI:30616"/>
    </ligand>
</feature>
<feature type="binding site" evidence="1">
    <location>
        <position position="56"/>
    </location>
    <ligand>
        <name>substrate</name>
    </ligand>
</feature>
<feature type="binding site" evidence="1">
    <location>
        <position position="143"/>
    </location>
    <ligand>
        <name>substrate</name>
    </ligand>
</feature>
<feature type="binding site" evidence="1">
    <location>
        <position position="155"/>
    </location>
    <ligand>
        <name>substrate</name>
    </ligand>
</feature>
<feature type="binding site" evidence="1">
    <location>
        <begin position="175"/>
        <end position="176"/>
    </location>
    <ligand>
        <name>ATP</name>
        <dbReference type="ChEBI" id="CHEBI:30616"/>
    </ligand>
</feature>
<dbReference type="EC" id="2.7.2.11" evidence="1"/>
<dbReference type="EMBL" id="CP001096">
    <property type="protein sequence ID" value="ACE98720.1"/>
    <property type="molecule type" value="Genomic_DNA"/>
</dbReference>
<dbReference type="RefSeq" id="WP_012493956.1">
    <property type="nucleotide sequence ID" value="NC_011004.1"/>
</dbReference>
<dbReference type="SMR" id="B3Q732"/>
<dbReference type="KEGG" id="rpt:Rpal_0158"/>
<dbReference type="HOGENOM" id="CLU_025400_2_0_5"/>
<dbReference type="OrthoDB" id="9804434at2"/>
<dbReference type="UniPathway" id="UPA00098">
    <property type="reaction ID" value="UER00359"/>
</dbReference>
<dbReference type="Proteomes" id="UP000001725">
    <property type="component" value="Chromosome"/>
</dbReference>
<dbReference type="GO" id="GO:0005829">
    <property type="term" value="C:cytosol"/>
    <property type="evidence" value="ECO:0007669"/>
    <property type="project" value="TreeGrafter"/>
</dbReference>
<dbReference type="GO" id="GO:0005524">
    <property type="term" value="F:ATP binding"/>
    <property type="evidence" value="ECO:0007669"/>
    <property type="project" value="UniProtKB-KW"/>
</dbReference>
<dbReference type="GO" id="GO:0004349">
    <property type="term" value="F:glutamate 5-kinase activity"/>
    <property type="evidence" value="ECO:0007669"/>
    <property type="project" value="UniProtKB-UniRule"/>
</dbReference>
<dbReference type="GO" id="GO:0003723">
    <property type="term" value="F:RNA binding"/>
    <property type="evidence" value="ECO:0007669"/>
    <property type="project" value="InterPro"/>
</dbReference>
<dbReference type="GO" id="GO:0055129">
    <property type="term" value="P:L-proline biosynthetic process"/>
    <property type="evidence" value="ECO:0007669"/>
    <property type="project" value="UniProtKB-UniRule"/>
</dbReference>
<dbReference type="CDD" id="cd04242">
    <property type="entry name" value="AAK_G5K_ProB"/>
    <property type="match status" value="1"/>
</dbReference>
<dbReference type="CDD" id="cd21157">
    <property type="entry name" value="PUA_G5K"/>
    <property type="match status" value="1"/>
</dbReference>
<dbReference type="FunFam" id="2.30.130.10:FF:000007">
    <property type="entry name" value="Glutamate 5-kinase"/>
    <property type="match status" value="1"/>
</dbReference>
<dbReference type="FunFam" id="3.40.1160.10:FF:000018">
    <property type="entry name" value="Glutamate 5-kinase"/>
    <property type="match status" value="1"/>
</dbReference>
<dbReference type="Gene3D" id="3.40.1160.10">
    <property type="entry name" value="Acetylglutamate kinase-like"/>
    <property type="match status" value="1"/>
</dbReference>
<dbReference type="Gene3D" id="2.30.130.10">
    <property type="entry name" value="PUA domain"/>
    <property type="match status" value="1"/>
</dbReference>
<dbReference type="HAMAP" id="MF_00456">
    <property type="entry name" value="ProB"/>
    <property type="match status" value="1"/>
</dbReference>
<dbReference type="InterPro" id="IPR036393">
    <property type="entry name" value="AceGlu_kinase-like_sf"/>
</dbReference>
<dbReference type="InterPro" id="IPR001048">
    <property type="entry name" value="Asp/Glu/Uridylate_kinase"/>
</dbReference>
<dbReference type="InterPro" id="IPR041739">
    <property type="entry name" value="G5K_ProB"/>
</dbReference>
<dbReference type="InterPro" id="IPR001057">
    <property type="entry name" value="Glu/AcGlu_kinase"/>
</dbReference>
<dbReference type="InterPro" id="IPR011529">
    <property type="entry name" value="Glu_5kinase"/>
</dbReference>
<dbReference type="InterPro" id="IPR005715">
    <property type="entry name" value="Glu_5kinase/COase_Synthase"/>
</dbReference>
<dbReference type="InterPro" id="IPR019797">
    <property type="entry name" value="Glutamate_5-kinase_CS"/>
</dbReference>
<dbReference type="InterPro" id="IPR002478">
    <property type="entry name" value="PUA"/>
</dbReference>
<dbReference type="InterPro" id="IPR015947">
    <property type="entry name" value="PUA-like_sf"/>
</dbReference>
<dbReference type="InterPro" id="IPR036974">
    <property type="entry name" value="PUA_sf"/>
</dbReference>
<dbReference type="NCBIfam" id="TIGR01027">
    <property type="entry name" value="proB"/>
    <property type="match status" value="1"/>
</dbReference>
<dbReference type="PANTHER" id="PTHR43654">
    <property type="entry name" value="GLUTAMATE 5-KINASE"/>
    <property type="match status" value="1"/>
</dbReference>
<dbReference type="PANTHER" id="PTHR43654:SF1">
    <property type="entry name" value="ISOPENTENYL PHOSPHATE KINASE"/>
    <property type="match status" value="1"/>
</dbReference>
<dbReference type="Pfam" id="PF00696">
    <property type="entry name" value="AA_kinase"/>
    <property type="match status" value="1"/>
</dbReference>
<dbReference type="Pfam" id="PF01472">
    <property type="entry name" value="PUA"/>
    <property type="match status" value="1"/>
</dbReference>
<dbReference type="PIRSF" id="PIRSF000729">
    <property type="entry name" value="GK"/>
    <property type="match status" value="1"/>
</dbReference>
<dbReference type="PRINTS" id="PR00474">
    <property type="entry name" value="GLU5KINASE"/>
</dbReference>
<dbReference type="SMART" id="SM00359">
    <property type="entry name" value="PUA"/>
    <property type="match status" value="1"/>
</dbReference>
<dbReference type="SUPFAM" id="SSF53633">
    <property type="entry name" value="Carbamate kinase-like"/>
    <property type="match status" value="1"/>
</dbReference>
<dbReference type="SUPFAM" id="SSF88697">
    <property type="entry name" value="PUA domain-like"/>
    <property type="match status" value="1"/>
</dbReference>
<dbReference type="PROSITE" id="PS00902">
    <property type="entry name" value="GLUTAMATE_5_KINASE"/>
    <property type="match status" value="1"/>
</dbReference>
<dbReference type="PROSITE" id="PS50890">
    <property type="entry name" value="PUA"/>
    <property type="match status" value="1"/>
</dbReference>
<protein>
    <recommendedName>
        <fullName evidence="1">Glutamate 5-kinase</fullName>
        <ecNumber evidence="1">2.7.2.11</ecNumber>
    </recommendedName>
    <alternativeName>
        <fullName evidence="1">Gamma-glutamyl kinase</fullName>
        <shortName evidence="1">GK</shortName>
    </alternativeName>
</protein>
<organism>
    <name type="scientific">Rhodopseudomonas palustris (strain TIE-1)</name>
    <dbReference type="NCBI Taxonomy" id="395960"/>
    <lineage>
        <taxon>Bacteria</taxon>
        <taxon>Pseudomonadati</taxon>
        <taxon>Pseudomonadota</taxon>
        <taxon>Alphaproteobacteria</taxon>
        <taxon>Hyphomicrobiales</taxon>
        <taxon>Nitrobacteraceae</taxon>
        <taxon>Rhodopseudomonas</taxon>
    </lineage>
</organism>
<comment type="function">
    <text evidence="1">Catalyzes the transfer of a phosphate group to glutamate to form L-glutamate 5-phosphate.</text>
</comment>
<comment type="catalytic activity">
    <reaction evidence="1">
        <text>L-glutamate + ATP = L-glutamyl 5-phosphate + ADP</text>
        <dbReference type="Rhea" id="RHEA:14877"/>
        <dbReference type="ChEBI" id="CHEBI:29985"/>
        <dbReference type="ChEBI" id="CHEBI:30616"/>
        <dbReference type="ChEBI" id="CHEBI:58274"/>
        <dbReference type="ChEBI" id="CHEBI:456216"/>
        <dbReference type="EC" id="2.7.2.11"/>
    </reaction>
</comment>
<comment type="pathway">
    <text evidence="1">Amino-acid biosynthesis; L-proline biosynthesis; L-glutamate 5-semialdehyde from L-glutamate: step 1/2.</text>
</comment>
<comment type="subcellular location">
    <subcellularLocation>
        <location evidence="1">Cytoplasm</location>
    </subcellularLocation>
</comment>
<comment type="similarity">
    <text evidence="1">Belongs to the glutamate 5-kinase family.</text>
</comment>